<proteinExistence type="evidence at protein level"/>
<sequence length="414" mass="47748">MHYCVLSAFLILHLVTVALSLSTCSTLDMDQFMRKRIEAIRGQILSKLKLTSPPEDYPEPEEVPPEVISIYNSTRDLLQEKASRRAAACERERSDEEYYAKEVYKIDMPPFFPSENAIPPTFYRPYFRIVRFDVSAMEKNASNLVKAEFRVFRLQNPKARVPEQRIELYQILKSKDLTSPTQRYIDSKVVKTRAEGEWLSFDVTDAVHEWLHHKDRNLGFKISLHCPCCTFVPSNNYIIPNKSEELEARFAGIDGTSTYTSGDQKTIKSTRKKNSGKTPHLLLMLLPSYRLESQQTNRRKKRALDAAYCFRNVQDNCCLRPLYIDFKRDLGWKWIHEPKGYNANFCAGACPYLWSSDTQHSRVLSLYNTINPEASASPCCVSQDLEPLTILYYIGKTPKIEQLSNMIVKSCKCS</sequence>
<accession>P61812</accession>
<accession>B4DKC5</accession>
<accession>P08112</accession>
<accession>Q15579</accession>
<accession>Q15581</accession>
<accession>Q4VAV9</accession>
<organism>
    <name type="scientific">Homo sapiens</name>
    <name type="common">Human</name>
    <dbReference type="NCBI Taxonomy" id="9606"/>
    <lineage>
        <taxon>Eukaryota</taxon>
        <taxon>Metazoa</taxon>
        <taxon>Chordata</taxon>
        <taxon>Craniata</taxon>
        <taxon>Vertebrata</taxon>
        <taxon>Euteleostomi</taxon>
        <taxon>Mammalia</taxon>
        <taxon>Eutheria</taxon>
        <taxon>Euarchontoglires</taxon>
        <taxon>Primates</taxon>
        <taxon>Haplorrhini</taxon>
        <taxon>Catarrhini</taxon>
        <taxon>Hominidae</taxon>
        <taxon>Homo</taxon>
    </lineage>
</organism>
<gene>
    <name type="primary">TGFB2</name>
</gene>
<reference key="1">
    <citation type="journal article" date="1987" name="EMBO J.">
        <title>Complementary DNA for human glioblastoma-derived T cell suppressor factor, a novel member of the transforming growth factor-beta gene family.</title>
        <authorList>
            <person name="de Martin R."/>
            <person name="Haendler B."/>
            <person name="Hofer-Warbinek R."/>
            <person name="Gaugitsch H."/>
            <person name="Wrann M."/>
            <person name="Schluesener H."/>
            <person name="Seifert J.M."/>
            <person name="Bodmer S."/>
            <person name="Fontana A."/>
            <person name="Hofer E."/>
        </authorList>
    </citation>
    <scope>NUCLEOTIDE SEQUENCE [MRNA] (ISOFORM A)</scope>
</reference>
<reference key="2">
    <citation type="journal article" date="1988" name="DNA">
        <title>Transforming growth factor-beta 2: cDNA cloning and sequence analysis.</title>
        <authorList>
            <person name="Madisen L."/>
            <person name="Webb N.R."/>
            <person name="Rose T.M."/>
            <person name="Marquardt H."/>
            <person name="Ikeda T."/>
            <person name="Twardzik D.R."/>
            <person name="Seyedin S."/>
            <person name="Purchio A.F."/>
        </authorList>
    </citation>
    <scope>NUCLEOTIDE SEQUENCE [MRNA] (ISOFORM B)</scope>
</reference>
<reference key="3">
    <citation type="journal article" date="1988" name="DNA">
        <title>Structural and sequence analysis of TGF-beta 2 cDNA clones predicts two different precursor proteins produced by alternative mRNA splicing.</title>
        <authorList>
            <person name="Webb N.R."/>
            <person name="Madisen L."/>
            <person name="Rose T.M."/>
            <person name="Purchio A.F."/>
        </authorList>
    </citation>
    <scope>NUCLEOTIDE SEQUENCE [MRNA] (ISOFORMS A AND B)</scope>
</reference>
<reference key="4">
    <citation type="submission" date="2003-10" db="EMBL/GenBank/DDBJ databases">
        <authorList>
            <consortium name="NIEHS SNPs program"/>
        </authorList>
    </citation>
    <scope>NUCLEOTIDE SEQUENCE [GENOMIC DNA]</scope>
    <scope>VARIANTS HIS-91 AND LEU-207</scope>
</reference>
<reference key="5">
    <citation type="journal article" date="2004" name="Nat. Genet.">
        <title>Complete sequencing and characterization of 21,243 full-length human cDNAs.</title>
        <authorList>
            <person name="Ota T."/>
            <person name="Suzuki Y."/>
            <person name="Nishikawa T."/>
            <person name="Otsuki T."/>
            <person name="Sugiyama T."/>
            <person name="Irie R."/>
            <person name="Wakamatsu A."/>
            <person name="Hayashi K."/>
            <person name="Sato H."/>
            <person name="Nagai K."/>
            <person name="Kimura K."/>
            <person name="Makita H."/>
            <person name="Sekine M."/>
            <person name="Obayashi M."/>
            <person name="Nishi T."/>
            <person name="Shibahara T."/>
            <person name="Tanaka T."/>
            <person name="Ishii S."/>
            <person name="Yamamoto J."/>
            <person name="Saito K."/>
            <person name="Kawai Y."/>
            <person name="Isono Y."/>
            <person name="Nakamura Y."/>
            <person name="Nagahari K."/>
            <person name="Murakami K."/>
            <person name="Yasuda T."/>
            <person name="Iwayanagi T."/>
            <person name="Wagatsuma M."/>
            <person name="Shiratori A."/>
            <person name="Sudo H."/>
            <person name="Hosoiri T."/>
            <person name="Kaku Y."/>
            <person name="Kodaira H."/>
            <person name="Kondo H."/>
            <person name="Sugawara M."/>
            <person name="Takahashi M."/>
            <person name="Kanda K."/>
            <person name="Yokoi T."/>
            <person name="Furuya T."/>
            <person name="Kikkawa E."/>
            <person name="Omura Y."/>
            <person name="Abe K."/>
            <person name="Kamihara K."/>
            <person name="Katsuta N."/>
            <person name="Sato K."/>
            <person name="Tanikawa M."/>
            <person name="Yamazaki M."/>
            <person name="Ninomiya K."/>
            <person name="Ishibashi T."/>
            <person name="Yamashita H."/>
            <person name="Murakawa K."/>
            <person name="Fujimori K."/>
            <person name="Tanai H."/>
            <person name="Kimata M."/>
            <person name="Watanabe M."/>
            <person name="Hiraoka S."/>
            <person name="Chiba Y."/>
            <person name="Ishida S."/>
            <person name="Ono Y."/>
            <person name="Takiguchi S."/>
            <person name="Watanabe S."/>
            <person name="Yosida M."/>
            <person name="Hotuta T."/>
            <person name="Kusano J."/>
            <person name="Kanehori K."/>
            <person name="Takahashi-Fujii A."/>
            <person name="Hara H."/>
            <person name="Tanase T.-O."/>
            <person name="Nomura Y."/>
            <person name="Togiya S."/>
            <person name="Komai F."/>
            <person name="Hara R."/>
            <person name="Takeuchi K."/>
            <person name="Arita M."/>
            <person name="Imose N."/>
            <person name="Musashino K."/>
            <person name="Yuuki H."/>
            <person name="Oshima A."/>
            <person name="Sasaki N."/>
            <person name="Aotsuka S."/>
            <person name="Yoshikawa Y."/>
            <person name="Matsunawa H."/>
            <person name="Ichihara T."/>
            <person name="Shiohata N."/>
            <person name="Sano S."/>
            <person name="Moriya S."/>
            <person name="Momiyama H."/>
            <person name="Satoh N."/>
            <person name="Takami S."/>
            <person name="Terashima Y."/>
            <person name="Suzuki O."/>
            <person name="Nakagawa S."/>
            <person name="Senoh A."/>
            <person name="Mizoguchi H."/>
            <person name="Goto Y."/>
            <person name="Shimizu F."/>
            <person name="Wakebe H."/>
            <person name="Hishigaki H."/>
            <person name="Watanabe T."/>
            <person name="Sugiyama A."/>
            <person name="Takemoto M."/>
            <person name="Kawakami B."/>
            <person name="Yamazaki M."/>
            <person name="Watanabe K."/>
            <person name="Kumagai A."/>
            <person name="Itakura S."/>
            <person name="Fukuzumi Y."/>
            <person name="Fujimori Y."/>
            <person name="Komiyama M."/>
            <person name="Tashiro H."/>
            <person name="Tanigami A."/>
            <person name="Fujiwara T."/>
            <person name="Ono T."/>
            <person name="Yamada K."/>
            <person name="Fujii Y."/>
            <person name="Ozaki K."/>
            <person name="Hirao M."/>
            <person name="Ohmori Y."/>
            <person name="Kawabata A."/>
            <person name="Hikiji T."/>
            <person name="Kobatake N."/>
            <person name="Inagaki H."/>
            <person name="Ikema Y."/>
            <person name="Okamoto S."/>
            <person name="Okitani R."/>
            <person name="Kawakami T."/>
            <person name="Noguchi S."/>
            <person name="Itoh T."/>
            <person name="Shigeta K."/>
            <person name="Senba T."/>
            <person name="Matsumura K."/>
            <person name="Nakajima Y."/>
            <person name="Mizuno T."/>
            <person name="Morinaga M."/>
            <person name="Sasaki M."/>
            <person name="Togashi T."/>
            <person name="Oyama M."/>
            <person name="Hata H."/>
            <person name="Watanabe M."/>
            <person name="Komatsu T."/>
            <person name="Mizushima-Sugano J."/>
            <person name="Satoh T."/>
            <person name="Shirai Y."/>
            <person name="Takahashi Y."/>
            <person name="Nakagawa K."/>
            <person name="Okumura K."/>
            <person name="Nagase T."/>
            <person name="Nomura N."/>
            <person name="Kikuchi H."/>
            <person name="Masuho Y."/>
            <person name="Yamashita R."/>
            <person name="Nakai K."/>
            <person name="Yada T."/>
            <person name="Nakamura Y."/>
            <person name="Ohara O."/>
            <person name="Isogai T."/>
            <person name="Sugano S."/>
        </authorList>
    </citation>
    <scope>NUCLEOTIDE SEQUENCE [LARGE SCALE MRNA] (ISOFORM B)</scope>
    <source>
        <tissue>Thalamus</tissue>
    </source>
</reference>
<reference key="6">
    <citation type="submission" date="2005-09" db="EMBL/GenBank/DDBJ databases">
        <authorList>
            <person name="Mural R.J."/>
            <person name="Istrail S."/>
            <person name="Sutton G.G."/>
            <person name="Florea L."/>
            <person name="Halpern A.L."/>
            <person name="Mobarry C.M."/>
            <person name="Lippert R."/>
            <person name="Walenz B."/>
            <person name="Shatkay H."/>
            <person name="Dew I."/>
            <person name="Miller J.R."/>
            <person name="Flanigan M.J."/>
            <person name="Edwards N.J."/>
            <person name="Bolanos R."/>
            <person name="Fasulo D."/>
            <person name="Halldorsson B.V."/>
            <person name="Hannenhalli S."/>
            <person name="Turner R."/>
            <person name="Yooseph S."/>
            <person name="Lu F."/>
            <person name="Nusskern D.R."/>
            <person name="Shue B.C."/>
            <person name="Zheng X.H."/>
            <person name="Zhong F."/>
            <person name="Delcher A.L."/>
            <person name="Huson D.H."/>
            <person name="Kravitz S.A."/>
            <person name="Mouchard L."/>
            <person name="Reinert K."/>
            <person name="Remington K.A."/>
            <person name="Clark A.G."/>
            <person name="Waterman M.S."/>
            <person name="Eichler E.E."/>
            <person name="Adams M.D."/>
            <person name="Hunkapiller M.W."/>
            <person name="Myers E.W."/>
            <person name="Venter J.C."/>
        </authorList>
    </citation>
    <scope>NUCLEOTIDE SEQUENCE [LARGE SCALE GENOMIC DNA]</scope>
</reference>
<reference key="7">
    <citation type="journal article" date="2004" name="Genome Res.">
        <title>The status, quality, and expansion of the NIH full-length cDNA project: the Mammalian Gene Collection (MGC).</title>
        <authorList>
            <consortium name="The MGC Project Team"/>
        </authorList>
    </citation>
    <scope>NUCLEOTIDE SEQUENCE [LARGE SCALE MRNA]</scope>
</reference>
<reference key="8">
    <citation type="journal article" date="1991" name="Growth Factors">
        <title>Molecular cloning and structure of the human transforming growth factor-beta 2 gene promoter.</title>
        <authorList>
            <person name="Noma T."/>
            <person name="Glick A.B."/>
            <person name="Geiser A.G."/>
            <person name="O'Reilly M.A."/>
            <person name="Miller J."/>
            <person name="Roberts A.B."/>
            <person name="Sporn M.B."/>
        </authorList>
    </citation>
    <scope>NUCLEOTIDE SEQUENCE [GENOMIC DNA] OF 1-115</scope>
    <source>
        <tissue>Lung</tissue>
    </source>
</reference>
<reference key="9">
    <citation type="journal article" date="1987" name="J. Biol. Chem.">
        <title>Complete amino acid sequence of human transforming growth factor type beta 2.</title>
        <authorList>
            <person name="Marquardt H."/>
            <person name="Lioubin M.N."/>
            <person name="Ikeda T."/>
        </authorList>
    </citation>
    <scope>PROTEIN SEQUENCE OF 303-414</scope>
</reference>
<reference key="10">
    <citation type="journal article" date="2003" name="Genomics">
        <title>Molecular characterization of a familial translocation implicates disruption of HDAC9 and possible position effect on TGFbeta2 in the pathogenesis of Peters' anomaly.</title>
        <authorList>
            <person name="David D."/>
            <person name="Cardoso J."/>
            <person name="Marques B."/>
            <person name="Marques R."/>
            <person name="Silva E.D."/>
            <person name="Santos H."/>
            <person name="Boavida M.G."/>
        </authorList>
    </citation>
    <scope>CHROMOSOMAL TRANSLOCATION WITH HDAC9</scope>
</reference>
<reference key="11">
    <citation type="journal article" date="2007" name="J. Biol. Chem.">
        <title>Mechanisms for asporin function and regulation in articular cartilage.</title>
        <authorList>
            <person name="Nakajima M."/>
            <person name="Kizawa H."/>
            <person name="Saitoh M."/>
            <person name="Kou I."/>
            <person name="Miyazono K."/>
            <person name="Ikegawa S."/>
        </authorList>
    </citation>
    <scope>INTERACTION WITH ASPN</scope>
</reference>
<reference key="12">
    <citation type="journal article" date="2009" name="Proc. Natl. Acad. Sci. U.S.A.">
        <title>GARP (LRRC32) is essential for the surface expression of latent TGF-beta on platelets and activated FOXP3+ regulatory T cells.</title>
        <authorList>
            <person name="Tran D.Q."/>
            <person name="Andersson J."/>
            <person name="Wang R."/>
            <person name="Ramsey H."/>
            <person name="Unutmaz D."/>
            <person name="Shevach E.M."/>
        </authorList>
    </citation>
    <scope>INTERACTION WITH LRRC32</scope>
</reference>
<reference key="13">
    <citation type="journal article" date="1992" name="Science">
        <title>Crystal structure of transforming growth factor-beta 2: an unusual fold for the superfamily.</title>
        <authorList>
            <person name="Daopin S."/>
            <person name="Piez K.A."/>
            <person name="Ogawa Y."/>
            <person name="Davies D.R."/>
        </authorList>
    </citation>
    <scope>X-RAY CRYSTALLOGRAPHY (2.1 ANGSTROMS) OF 303-414</scope>
    <scope>DISULFIDE BOND</scope>
    <scope>SUBUNIT</scope>
</reference>
<reference key="14">
    <citation type="journal article" date="1992" name="Nature">
        <title>An unusual feature revealed by the crystal structure at 2.2-A resolution of human transforming growth factor-beta 2.</title>
        <authorList>
            <person name="Schlunegger M.P."/>
            <person name="Gruetter M.G."/>
        </authorList>
    </citation>
    <scope>X-RAY CRYSTALLOGRAPHY (2.2 ANGSTROMS)OF 303-414</scope>
    <scope>DISULFIDE BOND</scope>
    <scope>SUBUNIT</scope>
</reference>
<reference key="15">
    <citation type="journal article" date="2001" name="Genes Immun.">
        <title>Two novel polymorphisms in the human transforming growth factor beta 2 gene.</title>
        <authorList>
            <person name="Alansari A."/>
            <person name="Hajeer A.H."/>
            <person name="Bayat A."/>
            <person name="Eyre S."/>
            <person name="Carthy D."/>
            <person name="Ollier W.E."/>
        </authorList>
    </citation>
    <scope>VARIANT HIS-91</scope>
</reference>
<reference key="16">
    <citation type="journal article" date="2012" name="Nat. Genet.">
        <title>TGFB2 mutations cause familial thoracic aortic aneurysms and dissections associated with mild systemic features of Marfan syndrome.</title>
        <authorList>
            <consortium name="National Heart, Lung, and Blood Institute (NHLBI) Go Exome Sequencing Project"/>
            <person name="Boileau C."/>
            <person name="Guo D.C."/>
            <person name="Hanna N."/>
            <person name="Regalado E.S."/>
            <person name="Detaint D."/>
            <person name="Gong L."/>
            <person name="Varret M."/>
            <person name="Prakash S.K."/>
            <person name="Li A.H."/>
            <person name="d'Indy H."/>
            <person name="Braverman A.C."/>
            <person name="Grandchamp B."/>
            <person name="Kwartler C.S."/>
            <person name="Gouya L."/>
            <person name="Santos-Cortez R.L."/>
            <person name="Abifadel M."/>
            <person name="Leal S.M."/>
            <person name="Muti C."/>
            <person name="Shendure J."/>
            <person name="Gross M.S."/>
            <person name="Rieder M.J."/>
            <person name="Vahanian A."/>
            <person name="Nickerson D.A."/>
            <person name="Michel J.B."/>
            <person name="Jondeau G."/>
            <person name="Milewicz D.M."/>
        </authorList>
    </citation>
    <scope>INVOLVEMENT IN LDS4</scope>
    <scope>VARIANTS LDS4 102-GLU--SER-414 DEL AND 229-CYS--SER-414 DEL</scope>
    <scope>FUNCTION</scope>
</reference>
<reference key="17">
    <citation type="journal article" date="2012" name="Nat. Genet.">
        <title>Loss-of-function mutations in TGFB2 cause a syndromic presentation of thoracic aortic aneurysm.</title>
        <authorList>
            <person name="Lindsay M.E."/>
            <person name="Schepers D."/>
            <person name="Bolar N.A."/>
            <person name="Doyle J.J."/>
            <person name="Gallo E."/>
            <person name="Fert-Bober J."/>
            <person name="Kempers M.J."/>
            <person name="Fishman E.K."/>
            <person name="Chen Y."/>
            <person name="Myers L."/>
            <person name="Bjeda D."/>
            <person name="Oswald G."/>
            <person name="Elias A.F."/>
            <person name="Levy H.P."/>
            <person name="Anderlid B.M."/>
            <person name="Yang M.H."/>
            <person name="Bongers E.M."/>
            <person name="Timmermans J."/>
            <person name="Braverman A.C."/>
            <person name="Canham N."/>
            <person name="Mortier G.R."/>
            <person name="Brunner H.G."/>
            <person name="Byers P.H."/>
            <person name="Van Eyk J."/>
            <person name="Van Laer L."/>
            <person name="Dietz H.C."/>
            <person name="Loeys B.L."/>
        </authorList>
    </citation>
    <scope>VARIANTS LDS4 100-ALA--TYR-104 DEL; TRP-299; CYS-302 AND HIS-338</scope>
    <scope>FUNCTION</scope>
</reference>
<reference key="18">
    <citation type="journal article" date="2014" name="Clin. Chim. Acta">
        <title>Whole exome sequencing for the identification of a new mutation in TGFB2 involved in a familial case of non-syndromic aortic disease.</title>
        <authorList>
            <person name="Gago-Diaz M."/>
            <person name="Blanco-Verea A."/>
            <person name="Teixido-Tura G."/>
            <person name="Valenzuela I."/>
            <person name="Del Campo M."/>
            <person name="Borregan M."/>
            <person name="Sobrino B."/>
            <person name="Amigo J."/>
            <person name="Garcia-Dorado D."/>
            <person name="Evangelista A."/>
            <person name="Carracedo A."/>
            <person name="Brion M."/>
        </authorList>
    </citation>
    <scope>INVOLVEMENT IN NON-SYNDROMIC AORTIC DISEASE</scope>
    <scope>VARIANT CYS-320</scope>
</reference>
<evidence type="ECO:0000250" key="1">
    <source>
        <dbReference type="UniProtKB" id="P01137"/>
    </source>
</evidence>
<evidence type="ECO:0000250" key="2">
    <source>
        <dbReference type="UniProtKB" id="P04202"/>
    </source>
</evidence>
<evidence type="ECO:0000250" key="3">
    <source>
        <dbReference type="UniProtKB" id="P27090"/>
    </source>
</evidence>
<evidence type="ECO:0000255" key="4"/>
<evidence type="ECO:0000269" key="5">
    <source>
    </source>
</evidence>
<evidence type="ECO:0000269" key="6">
    <source>
    </source>
</evidence>
<evidence type="ECO:0000269" key="7">
    <source>
    </source>
</evidence>
<evidence type="ECO:0000269" key="8">
    <source>
    </source>
</evidence>
<evidence type="ECO:0000269" key="9">
    <source>
    </source>
</evidence>
<evidence type="ECO:0000269" key="10">
    <source>
    </source>
</evidence>
<evidence type="ECO:0000269" key="11">
    <source>
    </source>
</evidence>
<evidence type="ECO:0000269" key="12">
    <source>
    </source>
</evidence>
<evidence type="ECO:0000269" key="13">
    <source>
    </source>
</evidence>
<evidence type="ECO:0000269" key="14">
    <source ref="4"/>
</evidence>
<evidence type="ECO:0000303" key="15">
    <source>
    </source>
</evidence>
<evidence type="ECO:0000303" key="16">
    <source>
    </source>
</evidence>
<evidence type="ECO:0000303" key="17">
    <source>
    </source>
</evidence>
<evidence type="ECO:0000303" key="18">
    <source>
    </source>
</evidence>
<evidence type="ECO:0000305" key="19"/>
<evidence type="ECO:0000305" key="20">
    <source>
    </source>
</evidence>
<evidence type="ECO:0007829" key="21">
    <source>
        <dbReference type="PDB" id="2TGI"/>
    </source>
</evidence>
<evidence type="ECO:0007829" key="22">
    <source>
        <dbReference type="PDB" id="8FXS"/>
    </source>
</evidence>
<evidence type="ECO:0007829" key="23">
    <source>
        <dbReference type="PDB" id="8FXV"/>
    </source>
</evidence>
<dbReference type="EMBL" id="Y00083">
    <property type="protein sequence ID" value="CAA68279.1"/>
    <property type="molecule type" value="mRNA"/>
</dbReference>
<dbReference type="EMBL" id="M19154">
    <property type="protein sequence ID" value="AAA50404.1"/>
    <property type="molecule type" value="mRNA"/>
</dbReference>
<dbReference type="EMBL" id="M19154">
    <property type="protein sequence ID" value="AAA50405.1"/>
    <property type="molecule type" value="mRNA"/>
</dbReference>
<dbReference type="EMBL" id="AY438979">
    <property type="protein sequence ID" value="AAR05442.1"/>
    <property type="molecule type" value="Genomic_DNA"/>
</dbReference>
<dbReference type="EMBL" id="AK296504">
    <property type="protein sequence ID" value="BAG59137.1"/>
    <property type="molecule type" value="mRNA"/>
</dbReference>
<dbReference type="EMBL" id="CH471100">
    <property type="protein sequence ID" value="EAW93326.1"/>
    <property type="molecule type" value="Genomic_DNA"/>
</dbReference>
<dbReference type="EMBL" id="BC096235">
    <property type="protein sequence ID" value="AAH96235.1"/>
    <property type="molecule type" value="mRNA"/>
</dbReference>
<dbReference type="EMBL" id="BC099635">
    <property type="protein sequence ID" value="AAH99635.1"/>
    <property type="molecule type" value="mRNA"/>
</dbReference>
<dbReference type="EMBL" id="M87843">
    <property type="protein sequence ID" value="AAA61162.1"/>
    <property type="molecule type" value="Genomic_DNA"/>
</dbReference>
<dbReference type="CCDS" id="CCDS1521.1"/>
<dbReference type="CCDS" id="CCDS44318.1">
    <molecule id="P61812-2"/>
</dbReference>
<dbReference type="PIR" id="A29478">
    <property type="entry name" value="B31249"/>
</dbReference>
<dbReference type="PIR" id="S06216">
    <property type="entry name" value="A31249"/>
</dbReference>
<dbReference type="RefSeq" id="NP_001129071.1">
    <molecule id="P61812-2"/>
    <property type="nucleotide sequence ID" value="NM_001135599.4"/>
</dbReference>
<dbReference type="RefSeq" id="NP_003229.1">
    <molecule id="P61812-1"/>
    <property type="nucleotide sequence ID" value="NM_003238.6"/>
</dbReference>
<dbReference type="PDB" id="1TFG">
    <property type="method" value="X-ray"/>
    <property type="resolution" value="1.95 A"/>
    <property type="chains" value="A=303-414"/>
</dbReference>
<dbReference type="PDB" id="2TGI">
    <property type="method" value="X-ray"/>
    <property type="resolution" value="1.80 A"/>
    <property type="chains" value="A=303-414"/>
</dbReference>
<dbReference type="PDB" id="4KXZ">
    <property type="method" value="X-ray"/>
    <property type="resolution" value="2.83 A"/>
    <property type="chains" value="A/B/D/E=303-414"/>
</dbReference>
<dbReference type="PDB" id="5TX4">
    <property type="method" value="X-ray"/>
    <property type="resolution" value="1.88 A"/>
    <property type="chains" value="B=303-414"/>
</dbReference>
<dbReference type="PDB" id="5TY4">
    <property type="method" value="EM"/>
    <property type="resolution" value="2.90 A"/>
    <property type="chains" value="B=317-413"/>
</dbReference>
<dbReference type="PDB" id="6I9J">
    <property type="method" value="X-ray"/>
    <property type="resolution" value="2.00 A"/>
    <property type="chains" value="A=303-414"/>
</dbReference>
<dbReference type="PDB" id="6XM2">
    <property type="method" value="X-ray"/>
    <property type="resolution" value="1.91 A"/>
    <property type="chains" value="I/J/K/L=303-414"/>
</dbReference>
<dbReference type="PDB" id="7RCO">
    <property type="method" value="X-ray"/>
    <property type="resolution" value="2.90 A"/>
    <property type="chains" value="A/B=303-414"/>
</dbReference>
<dbReference type="PDB" id="8DC0">
    <property type="method" value="X-ray"/>
    <property type="resolution" value="1.93 A"/>
    <property type="chains" value="B=303-414"/>
</dbReference>
<dbReference type="PDB" id="8FXS">
    <property type="method" value="X-ray"/>
    <property type="resolution" value="3.15 A"/>
    <property type="chains" value="A/B=21-414"/>
</dbReference>
<dbReference type="PDB" id="8FXV">
    <property type="method" value="X-ray"/>
    <property type="resolution" value="2.20 A"/>
    <property type="chains" value="A=21-414"/>
</dbReference>
<dbReference type="PDBsum" id="1TFG"/>
<dbReference type="PDBsum" id="2TGI"/>
<dbReference type="PDBsum" id="4KXZ"/>
<dbReference type="PDBsum" id="5TX4"/>
<dbReference type="PDBsum" id="5TY4"/>
<dbReference type="PDBsum" id="6I9J"/>
<dbReference type="PDBsum" id="6XM2"/>
<dbReference type="PDBsum" id="7RCO"/>
<dbReference type="PDBsum" id="8DC0"/>
<dbReference type="PDBsum" id="8FXS"/>
<dbReference type="PDBsum" id="8FXV"/>
<dbReference type="EMDB" id="EMD-8472"/>
<dbReference type="SMR" id="P61812"/>
<dbReference type="BioGRID" id="112900">
    <property type="interactions" value="49"/>
</dbReference>
<dbReference type="ComplexPortal" id="CPX-605">
    <property type="entry name" value="TGF-beta-2 complex"/>
</dbReference>
<dbReference type="ComplexPortal" id="CPX-834">
    <property type="entry name" value="TGF-beta-2-TGFR complex"/>
</dbReference>
<dbReference type="DIP" id="DIP-5936N"/>
<dbReference type="FunCoup" id="P61812">
    <property type="interactions" value="1100"/>
</dbReference>
<dbReference type="IntAct" id="P61812">
    <property type="interactions" value="7"/>
</dbReference>
<dbReference type="STRING" id="9606.ENSP00000355896"/>
<dbReference type="BindingDB" id="P61812"/>
<dbReference type="ChEMBL" id="CHEMBL3217393"/>
<dbReference type="DrugBank" id="DB05697">
    <property type="generic name" value="Trabedersen"/>
</dbReference>
<dbReference type="GlyConnect" id="1836">
    <property type="glycosylation" value="1 N-Linked glycan (1 site)"/>
</dbReference>
<dbReference type="GlyCosmos" id="P61812">
    <property type="glycosylation" value="3 sites, 1 glycan"/>
</dbReference>
<dbReference type="GlyGen" id="P61812">
    <property type="glycosylation" value="4 sites, 6 N-linked glycans (3 sites), 1 O-linked glycan (1 site)"/>
</dbReference>
<dbReference type="iPTMnet" id="P61812"/>
<dbReference type="PhosphoSitePlus" id="P61812"/>
<dbReference type="BioMuta" id="TGFB2"/>
<dbReference type="DMDM" id="48429157"/>
<dbReference type="jPOST" id="P61812"/>
<dbReference type="MassIVE" id="P61812"/>
<dbReference type="PaxDb" id="9606-ENSP00000355896"/>
<dbReference type="PeptideAtlas" id="P61812"/>
<dbReference type="ProteomicsDB" id="57335"/>
<dbReference type="ProteomicsDB" id="57336">
    <molecule id="P61812-2"/>
</dbReference>
<dbReference type="Pumba" id="P61812"/>
<dbReference type="ABCD" id="P61812">
    <property type="antibodies" value="37 sequenced antibodies"/>
</dbReference>
<dbReference type="Antibodypedia" id="20732">
    <property type="antibodies" value="616 antibodies from 38 providers"/>
</dbReference>
<dbReference type="DNASU" id="7042"/>
<dbReference type="Ensembl" id="ENST00000366929.4">
    <molecule id="P61812-2"/>
    <property type="protein sequence ID" value="ENSP00000355896.4"/>
    <property type="gene ID" value="ENSG00000092969.12"/>
</dbReference>
<dbReference type="Ensembl" id="ENST00000366930.9">
    <molecule id="P61812-1"/>
    <property type="protein sequence ID" value="ENSP00000355897.4"/>
    <property type="gene ID" value="ENSG00000092969.12"/>
</dbReference>
<dbReference type="GeneID" id="7042"/>
<dbReference type="KEGG" id="hsa:7042"/>
<dbReference type="MANE-Select" id="ENST00000366930.9">
    <property type="protein sequence ID" value="ENSP00000355897.4"/>
    <property type="RefSeq nucleotide sequence ID" value="NM_003238.6"/>
    <property type="RefSeq protein sequence ID" value="NP_003229.1"/>
</dbReference>
<dbReference type="UCSC" id="uc001hlm.4">
    <property type="organism name" value="human"/>
</dbReference>
<dbReference type="AGR" id="HGNC:11768"/>
<dbReference type="CTD" id="7042"/>
<dbReference type="DisGeNET" id="7042"/>
<dbReference type="GeneCards" id="TGFB2"/>
<dbReference type="GeneReviews" id="TGFB2"/>
<dbReference type="HGNC" id="HGNC:11768">
    <property type="gene designation" value="TGFB2"/>
</dbReference>
<dbReference type="HPA" id="ENSG00000092969">
    <property type="expression patterns" value="Low tissue specificity"/>
</dbReference>
<dbReference type="MalaCards" id="TGFB2"/>
<dbReference type="MIM" id="190220">
    <property type="type" value="gene"/>
</dbReference>
<dbReference type="MIM" id="614816">
    <property type="type" value="phenotype"/>
</dbReference>
<dbReference type="neXtProt" id="NX_P61812"/>
<dbReference type="OpenTargets" id="ENSG00000092969"/>
<dbReference type="Orphanet" id="91387">
    <property type="disease" value="Familial thoracic aortic aneurysm and aortic dissection"/>
</dbReference>
<dbReference type="Orphanet" id="60030">
    <property type="disease" value="Loeys-Dietz syndrome"/>
</dbReference>
<dbReference type="PharmGKB" id="PA36482"/>
<dbReference type="VEuPathDB" id="HostDB:ENSG00000092969"/>
<dbReference type="eggNOG" id="KOG3900">
    <property type="taxonomic scope" value="Eukaryota"/>
</dbReference>
<dbReference type="GeneTree" id="ENSGT00940000157390"/>
<dbReference type="HOGENOM" id="CLU_039840_0_0_1"/>
<dbReference type="InParanoid" id="P61812"/>
<dbReference type="OMA" id="NCCLRPF"/>
<dbReference type="OrthoDB" id="6092228at2759"/>
<dbReference type="PAN-GO" id="P61812">
    <property type="GO annotations" value="9 GO annotations based on evolutionary models"/>
</dbReference>
<dbReference type="PhylomeDB" id="P61812"/>
<dbReference type="TreeFam" id="TF318514"/>
<dbReference type="PathwayCommons" id="P61812"/>
<dbReference type="Reactome" id="R-HSA-114608">
    <property type="pathway name" value="Platelet degranulation"/>
</dbReference>
<dbReference type="Reactome" id="R-HSA-2129379">
    <property type="pathway name" value="Molecules associated with elastic fibres"/>
</dbReference>
<dbReference type="Reactome" id="R-HSA-2173789">
    <property type="pathway name" value="TGF-beta receptor signaling activates SMADs"/>
</dbReference>
<dbReference type="Reactome" id="R-HSA-3000178">
    <property type="pathway name" value="ECM proteoglycans"/>
</dbReference>
<dbReference type="Reactome" id="R-HSA-9839389">
    <property type="pathway name" value="TGFBR3 regulates TGF-beta signaling"/>
</dbReference>
<dbReference type="SignaLink" id="P61812"/>
<dbReference type="SIGNOR" id="P61812"/>
<dbReference type="BioGRID-ORCS" id="7042">
    <property type="hits" value="13 hits in 1155 CRISPR screens"/>
</dbReference>
<dbReference type="ChiTaRS" id="TGFB2">
    <property type="organism name" value="human"/>
</dbReference>
<dbReference type="EvolutionaryTrace" id="P61812"/>
<dbReference type="GeneWiki" id="TGF_beta_2"/>
<dbReference type="GenomeRNAi" id="7042"/>
<dbReference type="Pharos" id="P61812">
    <property type="development level" value="Tbio"/>
</dbReference>
<dbReference type="PRO" id="PR:P61812"/>
<dbReference type="Proteomes" id="UP000005640">
    <property type="component" value="Chromosome 1"/>
</dbReference>
<dbReference type="RNAct" id="P61812">
    <property type="molecule type" value="protein"/>
</dbReference>
<dbReference type="Bgee" id="ENSG00000092969">
    <property type="expression patterns" value="Expressed in calcaneal tendon and 134 other cell types or tissues"/>
</dbReference>
<dbReference type="GO" id="GO:0030424">
    <property type="term" value="C:axon"/>
    <property type="evidence" value="ECO:0000250"/>
    <property type="project" value="UniProtKB"/>
</dbReference>
<dbReference type="GO" id="GO:0062023">
    <property type="term" value="C:collagen-containing extracellular matrix"/>
    <property type="evidence" value="ECO:0000314"/>
    <property type="project" value="BHF-UCL"/>
</dbReference>
<dbReference type="GO" id="GO:0005768">
    <property type="term" value="C:endosome"/>
    <property type="evidence" value="ECO:0007669"/>
    <property type="project" value="Ensembl"/>
</dbReference>
<dbReference type="GO" id="GO:0005576">
    <property type="term" value="C:extracellular region"/>
    <property type="evidence" value="ECO:0000314"/>
    <property type="project" value="UniProtKB"/>
</dbReference>
<dbReference type="GO" id="GO:0005615">
    <property type="term" value="C:extracellular space"/>
    <property type="evidence" value="ECO:0000314"/>
    <property type="project" value="AgBase"/>
</dbReference>
<dbReference type="GO" id="GO:0043025">
    <property type="term" value="C:neuronal cell body"/>
    <property type="evidence" value="ECO:0000250"/>
    <property type="project" value="UniProtKB"/>
</dbReference>
<dbReference type="GO" id="GO:0031093">
    <property type="term" value="C:platelet alpha granule lumen"/>
    <property type="evidence" value="ECO:0000304"/>
    <property type="project" value="Reactome"/>
</dbReference>
<dbReference type="GO" id="GO:0001540">
    <property type="term" value="F:amyloid-beta binding"/>
    <property type="evidence" value="ECO:0000314"/>
    <property type="project" value="UniProtKB"/>
</dbReference>
<dbReference type="GO" id="GO:0005125">
    <property type="term" value="F:cytokine activity"/>
    <property type="evidence" value="ECO:0000318"/>
    <property type="project" value="GO_Central"/>
</dbReference>
<dbReference type="GO" id="GO:0008083">
    <property type="term" value="F:growth factor activity"/>
    <property type="evidence" value="ECO:0007669"/>
    <property type="project" value="UniProtKB-KW"/>
</dbReference>
<dbReference type="GO" id="GO:0042803">
    <property type="term" value="F:protein homodimerization activity"/>
    <property type="evidence" value="ECO:0000314"/>
    <property type="project" value="UniProtKB"/>
</dbReference>
<dbReference type="GO" id="GO:0005102">
    <property type="term" value="F:signaling receptor binding"/>
    <property type="evidence" value="ECO:0000315"/>
    <property type="project" value="UniProtKB"/>
</dbReference>
<dbReference type="GO" id="GO:0005160">
    <property type="term" value="F:transforming growth factor beta receptor binding"/>
    <property type="evidence" value="ECO:0000314"/>
    <property type="project" value="UniProtKB"/>
</dbReference>
<dbReference type="GO" id="GO:0005114">
    <property type="term" value="F:type II transforming growth factor beta receptor binding"/>
    <property type="evidence" value="ECO:0000314"/>
    <property type="project" value="BHF-UCL"/>
</dbReference>
<dbReference type="GO" id="GO:0034714">
    <property type="term" value="F:type III transforming growth factor beta receptor binding"/>
    <property type="evidence" value="ECO:0000315"/>
    <property type="project" value="AgBase"/>
</dbReference>
<dbReference type="GO" id="GO:0006924">
    <property type="term" value="P:activation-induced cell death of T cells"/>
    <property type="evidence" value="ECO:0007669"/>
    <property type="project" value="Ensembl"/>
</dbReference>
<dbReference type="GO" id="GO:0035910">
    <property type="term" value="P:ascending aorta morphogenesis"/>
    <property type="evidence" value="ECO:0000250"/>
    <property type="project" value="BHF-UCL"/>
</dbReference>
<dbReference type="GO" id="GO:0060413">
    <property type="term" value="P:atrial septum morphogenesis"/>
    <property type="evidence" value="ECO:0000250"/>
    <property type="project" value="BHF-UCL"/>
</dbReference>
<dbReference type="GO" id="GO:0003289">
    <property type="term" value="P:atrial septum primum morphogenesis"/>
    <property type="evidence" value="ECO:0000250"/>
    <property type="project" value="BHF-UCL"/>
</dbReference>
<dbReference type="GO" id="GO:0003181">
    <property type="term" value="P:atrioventricular valve morphogenesis"/>
    <property type="evidence" value="ECO:0000250"/>
    <property type="project" value="BHF-UCL"/>
</dbReference>
<dbReference type="GO" id="GO:0007411">
    <property type="term" value="P:axon guidance"/>
    <property type="evidence" value="ECO:0007669"/>
    <property type="project" value="Ensembl"/>
</dbReference>
<dbReference type="GO" id="GO:0001974">
    <property type="term" value="P:blood vessel remodeling"/>
    <property type="evidence" value="ECO:0007669"/>
    <property type="project" value="Ensembl"/>
</dbReference>
<dbReference type="GO" id="GO:0060317">
    <property type="term" value="P:cardiac epithelial to mesenchymal transition"/>
    <property type="evidence" value="ECO:0000314"/>
    <property type="project" value="BHF-UCL"/>
</dbReference>
<dbReference type="GO" id="GO:0060038">
    <property type="term" value="P:cardiac muscle cell proliferation"/>
    <property type="evidence" value="ECO:0000314"/>
    <property type="project" value="UniProtKB"/>
</dbReference>
<dbReference type="GO" id="GO:0003215">
    <property type="term" value="P:cardiac right ventricle morphogenesis"/>
    <property type="evidence" value="ECO:0000250"/>
    <property type="project" value="BHF-UCL"/>
</dbReference>
<dbReference type="GO" id="GO:0010002">
    <property type="term" value="P:cardioblast differentiation"/>
    <property type="evidence" value="ECO:0000314"/>
    <property type="project" value="UniProtKB"/>
</dbReference>
<dbReference type="GO" id="GO:0001502">
    <property type="term" value="P:cartilage condensation"/>
    <property type="evidence" value="ECO:0007669"/>
    <property type="project" value="Ensembl"/>
</dbReference>
<dbReference type="GO" id="GO:0016477">
    <property type="term" value="P:cell migration"/>
    <property type="evidence" value="ECO:0000314"/>
    <property type="project" value="BHF-UCL"/>
</dbReference>
<dbReference type="GO" id="GO:0000902">
    <property type="term" value="P:cell morphogenesis"/>
    <property type="evidence" value="ECO:0000314"/>
    <property type="project" value="UniProtKB"/>
</dbReference>
<dbReference type="GO" id="GO:0045216">
    <property type="term" value="P:cell-cell junction organization"/>
    <property type="evidence" value="ECO:0000314"/>
    <property type="project" value="BHF-UCL"/>
</dbReference>
<dbReference type="GO" id="GO:0030199">
    <property type="term" value="P:collagen fibril organization"/>
    <property type="evidence" value="ECO:0000314"/>
    <property type="project" value="BHF-UCL"/>
</dbReference>
<dbReference type="GO" id="GO:1904888">
    <property type="term" value="P:cranial skeletal system development"/>
    <property type="evidence" value="ECO:0000250"/>
    <property type="project" value="BHF-UCL"/>
</dbReference>
<dbReference type="GO" id="GO:0042416">
    <property type="term" value="P:dopamine biosynthetic process"/>
    <property type="evidence" value="ECO:0000250"/>
    <property type="project" value="UniProtKB"/>
</dbReference>
<dbReference type="GO" id="GO:0009792">
    <property type="term" value="P:embryo development ending in birth or egg hatching"/>
    <property type="evidence" value="ECO:0000304"/>
    <property type="project" value="UniProtKB"/>
</dbReference>
<dbReference type="GO" id="GO:0048566">
    <property type="term" value="P:embryonic digestive tract development"/>
    <property type="evidence" value="ECO:0000270"/>
    <property type="project" value="DFLAT"/>
</dbReference>
<dbReference type="GO" id="GO:0030326">
    <property type="term" value="P:embryonic limb morphogenesis"/>
    <property type="evidence" value="ECO:0000250"/>
    <property type="project" value="BHF-UCL"/>
</dbReference>
<dbReference type="GO" id="GO:0003274">
    <property type="term" value="P:endocardial cushion fusion"/>
    <property type="evidence" value="ECO:0000250"/>
    <property type="project" value="BHF-UCL"/>
</dbReference>
<dbReference type="GO" id="GO:0003203">
    <property type="term" value="P:endocardial cushion morphogenesis"/>
    <property type="evidence" value="ECO:0000250"/>
    <property type="project" value="BHF-UCL"/>
</dbReference>
<dbReference type="GO" id="GO:0030855">
    <property type="term" value="P:epithelial cell differentiation"/>
    <property type="evidence" value="ECO:0000314"/>
    <property type="project" value="BHF-UCL"/>
</dbReference>
<dbReference type="GO" id="GO:0001837">
    <property type="term" value="P:epithelial to mesenchymal transition"/>
    <property type="evidence" value="ECO:0000314"/>
    <property type="project" value="BHF-UCL"/>
</dbReference>
<dbReference type="GO" id="GO:0097191">
    <property type="term" value="P:extrinsic apoptotic signaling pathway"/>
    <property type="evidence" value="ECO:0000314"/>
    <property type="project" value="BHF-UCL"/>
</dbReference>
<dbReference type="GO" id="GO:0097192">
    <property type="term" value="P:extrinsic apoptotic signaling pathway in absence of ligand"/>
    <property type="evidence" value="ECO:0007669"/>
    <property type="project" value="Ensembl"/>
</dbReference>
<dbReference type="GO" id="GO:0001654">
    <property type="term" value="P:eye development"/>
    <property type="evidence" value="ECO:0000314"/>
    <property type="project" value="UniProtKB"/>
</dbReference>
<dbReference type="GO" id="GO:0060325">
    <property type="term" value="P:face morphogenesis"/>
    <property type="evidence" value="ECO:0007669"/>
    <property type="project" value="Ensembl"/>
</dbReference>
<dbReference type="GO" id="GO:0048699">
    <property type="term" value="P:generation of neurons"/>
    <property type="evidence" value="ECO:0000304"/>
    <property type="project" value="UniProtKB"/>
</dbReference>
<dbReference type="GO" id="GO:0008347">
    <property type="term" value="P:glial cell migration"/>
    <property type="evidence" value="ECO:0000314"/>
    <property type="project" value="BHF-UCL"/>
</dbReference>
<dbReference type="GO" id="GO:0001942">
    <property type="term" value="P:hair follicle development"/>
    <property type="evidence" value="ECO:0000314"/>
    <property type="project" value="UniProtKB"/>
</dbReference>
<dbReference type="GO" id="GO:0031069">
    <property type="term" value="P:hair follicle morphogenesis"/>
    <property type="evidence" value="ECO:0000250"/>
    <property type="project" value="UniProtKB"/>
</dbReference>
<dbReference type="GO" id="GO:0007507">
    <property type="term" value="P:heart development"/>
    <property type="evidence" value="ECO:0000314"/>
    <property type="project" value="UniProtKB"/>
</dbReference>
<dbReference type="GO" id="GO:0003007">
    <property type="term" value="P:heart morphogenesis"/>
    <property type="evidence" value="ECO:0000314"/>
    <property type="project" value="BHF-UCL"/>
</dbReference>
<dbReference type="GO" id="GO:0003179">
    <property type="term" value="P:heart valve morphogenesis"/>
    <property type="evidence" value="ECO:0000250"/>
    <property type="project" value="BHF-UCL"/>
</dbReference>
<dbReference type="GO" id="GO:0030097">
    <property type="term" value="P:hemopoiesis"/>
    <property type="evidence" value="ECO:0000250"/>
    <property type="project" value="UniProtKB"/>
</dbReference>
<dbReference type="GO" id="GO:0048839">
    <property type="term" value="P:inner ear development"/>
    <property type="evidence" value="ECO:0000250"/>
    <property type="project" value="BHF-UCL"/>
</dbReference>
<dbReference type="GO" id="GO:0001822">
    <property type="term" value="P:kidney development"/>
    <property type="evidence" value="ECO:0000250"/>
    <property type="project" value="BHF-UCL"/>
</dbReference>
<dbReference type="GO" id="GO:0008584">
    <property type="term" value="P:male gonad development"/>
    <property type="evidence" value="ECO:0000250"/>
    <property type="project" value="BHF-UCL"/>
</dbReference>
<dbReference type="GO" id="GO:0003149">
    <property type="term" value="P:membranous septum morphogenesis"/>
    <property type="evidence" value="ECO:0000250"/>
    <property type="project" value="BHF-UCL"/>
</dbReference>
<dbReference type="GO" id="GO:0016525">
    <property type="term" value="P:negative regulation of angiogenesis"/>
    <property type="evidence" value="ECO:0000314"/>
    <property type="project" value="BHF-UCL"/>
</dbReference>
<dbReference type="GO" id="GO:0061037">
    <property type="term" value="P:negative regulation of cartilage development"/>
    <property type="evidence" value="ECO:0007669"/>
    <property type="project" value="Ensembl"/>
</dbReference>
<dbReference type="GO" id="GO:0030308">
    <property type="term" value="P:negative regulation of cell growth"/>
    <property type="evidence" value="ECO:0000314"/>
    <property type="project" value="BHF-UCL"/>
</dbReference>
<dbReference type="GO" id="GO:0008285">
    <property type="term" value="P:negative regulation of cell population proliferation"/>
    <property type="evidence" value="ECO:0000314"/>
    <property type="project" value="UniProtKB"/>
</dbReference>
<dbReference type="GO" id="GO:0050680">
    <property type="term" value="P:negative regulation of epithelial cell proliferation"/>
    <property type="evidence" value="ECO:0000314"/>
    <property type="project" value="BHF-UCL"/>
</dbReference>
<dbReference type="GO" id="GO:1905006">
    <property type="term" value="P:negative regulation of epithelial to mesenchymal transition involved in endocardial cushion formation"/>
    <property type="evidence" value="ECO:0000250"/>
    <property type="project" value="BHF-UCL"/>
</dbReference>
<dbReference type="GO" id="GO:0010629">
    <property type="term" value="P:negative regulation of gene expression"/>
    <property type="evidence" value="ECO:0000314"/>
    <property type="project" value="BHF-UCL"/>
</dbReference>
<dbReference type="GO" id="GO:0010936">
    <property type="term" value="P:negative regulation of macrophage cytokine production"/>
    <property type="evidence" value="ECO:0000314"/>
    <property type="project" value="DFLAT"/>
</dbReference>
<dbReference type="GO" id="GO:0046580">
    <property type="term" value="P:negative regulation of Ras protein signal transduction"/>
    <property type="evidence" value="ECO:0000250"/>
    <property type="project" value="BHF-UCL"/>
</dbReference>
<dbReference type="GO" id="GO:0003407">
    <property type="term" value="P:neural retina development"/>
    <property type="evidence" value="ECO:0000250"/>
    <property type="project" value="BHF-UCL"/>
</dbReference>
<dbReference type="GO" id="GO:0001843">
    <property type="term" value="P:neural tube closure"/>
    <property type="evidence" value="ECO:0000250"/>
    <property type="project" value="BHF-UCL"/>
</dbReference>
<dbReference type="GO" id="GO:0048666">
    <property type="term" value="P:neuron development"/>
    <property type="evidence" value="ECO:0000250"/>
    <property type="project" value="UniProtKB"/>
</dbReference>
<dbReference type="GO" id="GO:0048663">
    <property type="term" value="P:neuron fate commitment"/>
    <property type="evidence" value="ECO:0007669"/>
    <property type="project" value="Ensembl"/>
</dbReference>
<dbReference type="GO" id="GO:0030593">
    <property type="term" value="P:neutrophil chemotaxis"/>
    <property type="evidence" value="ECO:0000250"/>
    <property type="project" value="UniProtKB"/>
</dbReference>
<dbReference type="GO" id="GO:0042476">
    <property type="term" value="P:odontogenesis"/>
    <property type="evidence" value="ECO:0000303"/>
    <property type="project" value="BHF-UCL"/>
</dbReference>
<dbReference type="GO" id="GO:0003148">
    <property type="term" value="P:outflow tract septum morphogenesis"/>
    <property type="evidence" value="ECO:0000250"/>
    <property type="project" value="BHF-UCL"/>
</dbReference>
<dbReference type="GO" id="GO:1904238">
    <property type="term" value="P:pericyte cell differentiation"/>
    <property type="evidence" value="ECO:0007669"/>
    <property type="project" value="Ensembl"/>
</dbReference>
<dbReference type="GO" id="GO:0061626">
    <property type="term" value="P:pharyngeal arch artery morphogenesis"/>
    <property type="evidence" value="ECO:0000250"/>
    <property type="project" value="BHF-UCL"/>
</dbReference>
<dbReference type="GO" id="GO:0070237">
    <property type="term" value="P:positive regulation of activation-induced cell death of T cells"/>
    <property type="evidence" value="ECO:0007669"/>
    <property type="project" value="Ensembl"/>
</dbReference>
<dbReference type="GO" id="GO:0051891">
    <property type="term" value="P:positive regulation of cardioblast differentiation"/>
    <property type="evidence" value="ECO:0000314"/>
    <property type="project" value="UniProtKB"/>
</dbReference>
<dbReference type="GO" id="GO:0033630">
    <property type="term" value="P:positive regulation of cell adhesion mediated by integrin"/>
    <property type="evidence" value="ECO:0000314"/>
    <property type="project" value="BHF-UCL"/>
</dbReference>
<dbReference type="GO" id="GO:0045787">
    <property type="term" value="P:positive regulation of cell cycle"/>
    <property type="evidence" value="ECO:0000250"/>
    <property type="project" value="UniProtKB"/>
</dbReference>
<dbReference type="GO" id="GO:0051781">
    <property type="term" value="P:positive regulation of cell division"/>
    <property type="evidence" value="ECO:0007669"/>
    <property type="project" value="UniProtKB-KW"/>
</dbReference>
<dbReference type="GO" id="GO:0030307">
    <property type="term" value="P:positive regulation of cell growth"/>
    <property type="evidence" value="ECO:0000314"/>
    <property type="project" value="UniProtKB"/>
</dbReference>
<dbReference type="GO" id="GO:0008284">
    <property type="term" value="P:positive regulation of cell population proliferation"/>
    <property type="evidence" value="ECO:0000314"/>
    <property type="project" value="UniProtKB"/>
</dbReference>
<dbReference type="GO" id="GO:0010634">
    <property type="term" value="P:positive regulation of epithelial cell migration"/>
    <property type="evidence" value="ECO:0000314"/>
    <property type="project" value="BHF-UCL"/>
</dbReference>
<dbReference type="GO" id="GO:0010718">
    <property type="term" value="P:positive regulation of epithelial to mesenchymal transition"/>
    <property type="evidence" value="ECO:0000314"/>
    <property type="project" value="BHF-UCL"/>
</dbReference>
<dbReference type="GO" id="GO:1905007">
    <property type="term" value="P:positive regulation of epithelial to mesenchymal transition involved in endocardial cushion formation"/>
    <property type="evidence" value="ECO:0000250"/>
    <property type="project" value="BHF-UCL"/>
</dbReference>
<dbReference type="GO" id="GO:0090091">
    <property type="term" value="P:positive regulation of extracellular matrix disassembly"/>
    <property type="evidence" value="ECO:0007669"/>
    <property type="project" value="Ensembl"/>
</dbReference>
<dbReference type="GO" id="GO:2001241">
    <property type="term" value="P:positive regulation of extrinsic apoptotic signaling pathway in absence of ligand"/>
    <property type="evidence" value="ECO:0007669"/>
    <property type="project" value="Ensembl"/>
</dbReference>
<dbReference type="GO" id="GO:0010628">
    <property type="term" value="P:positive regulation of gene expression"/>
    <property type="evidence" value="ECO:0007669"/>
    <property type="project" value="Ensembl"/>
</dbReference>
<dbReference type="GO" id="GO:0045823">
    <property type="term" value="P:positive regulation of heart contraction"/>
    <property type="evidence" value="ECO:0000314"/>
    <property type="project" value="UniProtKB"/>
</dbReference>
<dbReference type="GO" id="GO:0050778">
    <property type="term" value="P:positive regulation of immune response"/>
    <property type="evidence" value="ECO:0000250"/>
    <property type="project" value="UniProtKB"/>
</dbReference>
<dbReference type="GO" id="GO:0045726">
    <property type="term" value="P:positive regulation of integrin biosynthetic process"/>
    <property type="evidence" value="ECO:0000314"/>
    <property type="project" value="BHF-UCL"/>
</dbReference>
<dbReference type="GO" id="GO:1902895">
    <property type="term" value="P:positive regulation of miRNA transcription"/>
    <property type="evidence" value="ECO:0000314"/>
    <property type="project" value="BHF-UCL"/>
</dbReference>
<dbReference type="GO" id="GO:0043525">
    <property type="term" value="P:positive regulation of neuron apoptotic process"/>
    <property type="evidence" value="ECO:0000314"/>
    <property type="project" value="UniProtKB"/>
</dbReference>
<dbReference type="GO" id="GO:0045747">
    <property type="term" value="P:positive regulation of Notch signaling pathway"/>
    <property type="evidence" value="ECO:0000314"/>
    <property type="project" value="BHF-UCL"/>
</dbReference>
<dbReference type="GO" id="GO:0051897">
    <property type="term" value="P:positive regulation of phosphatidylinositol 3-kinase/protein kinase B signal transduction"/>
    <property type="evidence" value="ECO:0000314"/>
    <property type="project" value="BHF-UCL"/>
</dbReference>
<dbReference type="GO" id="GO:1900182">
    <property type="term" value="P:positive regulation of protein localization to nucleus"/>
    <property type="evidence" value="ECO:0007669"/>
    <property type="project" value="Ensembl"/>
</dbReference>
<dbReference type="GO" id="GO:0050714">
    <property type="term" value="P:positive regulation of protein secretion"/>
    <property type="evidence" value="ECO:0000314"/>
    <property type="project" value="BHF-UCL"/>
</dbReference>
<dbReference type="GO" id="GO:0060391">
    <property type="term" value="P:positive regulation of SMAD protein signal transduction"/>
    <property type="evidence" value="ECO:0000314"/>
    <property type="project" value="BHF-UCL"/>
</dbReference>
<dbReference type="GO" id="GO:0032874">
    <property type="term" value="P:positive regulation of stress-activated MAPK cascade"/>
    <property type="evidence" value="ECO:0000314"/>
    <property type="project" value="BHF-UCL"/>
</dbReference>
<dbReference type="GO" id="GO:0051795">
    <property type="term" value="P:positive regulation of timing of catagen"/>
    <property type="evidence" value="ECO:0000314"/>
    <property type="project" value="UniProtKB"/>
</dbReference>
<dbReference type="GO" id="GO:0003184">
    <property type="term" value="P:pulmonary valve morphogenesis"/>
    <property type="evidence" value="ECO:0000250"/>
    <property type="project" value="BHF-UCL"/>
</dbReference>
<dbReference type="GO" id="GO:0032956">
    <property type="term" value="P:regulation of actin cytoskeleton organization"/>
    <property type="evidence" value="ECO:0007669"/>
    <property type="project" value="Ensembl"/>
</dbReference>
<dbReference type="GO" id="GO:1902256">
    <property type="term" value="P:regulation of apoptotic process involved in outflow tract morphogenesis"/>
    <property type="evidence" value="ECO:0000250"/>
    <property type="project" value="BHF-UCL"/>
</dbReference>
<dbReference type="GO" id="GO:0042127">
    <property type="term" value="P:regulation of cell population proliferation"/>
    <property type="evidence" value="ECO:0000314"/>
    <property type="project" value="BHF-UCL"/>
</dbReference>
<dbReference type="GO" id="GO:0051794">
    <property type="term" value="P:regulation of timing of catagen"/>
    <property type="evidence" value="ECO:0000314"/>
    <property type="project" value="UniProtKB"/>
</dbReference>
<dbReference type="GO" id="GO:0032909">
    <property type="term" value="P:regulation of transforming growth factor beta2 production"/>
    <property type="evidence" value="ECO:0000315"/>
    <property type="project" value="BHF-UCL"/>
</dbReference>
<dbReference type="GO" id="GO:0001666">
    <property type="term" value="P:response to hypoxia"/>
    <property type="evidence" value="ECO:0000315"/>
    <property type="project" value="BHF-UCL"/>
</dbReference>
<dbReference type="GO" id="GO:0032570">
    <property type="term" value="P:response to progesterone"/>
    <property type="evidence" value="ECO:0000314"/>
    <property type="project" value="BHF-UCL"/>
</dbReference>
<dbReference type="GO" id="GO:0009611">
    <property type="term" value="P:response to wounding"/>
    <property type="evidence" value="ECO:0000270"/>
    <property type="project" value="BHF-UCL"/>
</dbReference>
<dbReference type="GO" id="GO:0007435">
    <property type="term" value="P:salivary gland morphogenesis"/>
    <property type="evidence" value="ECO:0000270"/>
    <property type="project" value="BHF-UCL"/>
</dbReference>
<dbReference type="GO" id="GO:0062009">
    <property type="term" value="P:secondary palate development"/>
    <property type="evidence" value="ECO:0000250"/>
    <property type="project" value="BHF-UCL"/>
</dbReference>
<dbReference type="GO" id="GO:0023052">
    <property type="term" value="P:signaling"/>
    <property type="evidence" value="ECO:0000314"/>
    <property type="project" value="UniProtKB"/>
</dbReference>
<dbReference type="GO" id="GO:0001501">
    <property type="term" value="P:skeletal system development"/>
    <property type="evidence" value="ECO:0000250"/>
    <property type="project" value="BHF-UCL"/>
</dbReference>
<dbReference type="GO" id="GO:0048103">
    <property type="term" value="P:somatic stem cell division"/>
    <property type="evidence" value="ECO:0000250"/>
    <property type="project" value="UniProtKB"/>
</dbReference>
<dbReference type="GO" id="GO:1903701">
    <property type="term" value="P:substantia propria of cornea development"/>
    <property type="evidence" value="ECO:0000250"/>
    <property type="project" value="BHF-UCL"/>
</dbReference>
<dbReference type="GO" id="GO:0007179">
    <property type="term" value="P:transforming growth factor beta receptor signaling pathway"/>
    <property type="evidence" value="ECO:0000314"/>
    <property type="project" value="BHF-UCL"/>
</dbReference>
<dbReference type="GO" id="GO:0042704">
    <property type="term" value="P:uterine wall breakdown"/>
    <property type="evidence" value="ECO:0000304"/>
    <property type="project" value="BHF-UCL"/>
</dbReference>
<dbReference type="GO" id="GO:0060065">
    <property type="term" value="P:uterus development"/>
    <property type="evidence" value="ECO:0000250"/>
    <property type="project" value="BHF-UCL"/>
</dbReference>
<dbReference type="GO" id="GO:0060412">
    <property type="term" value="P:ventricular septum morphogenesis"/>
    <property type="evidence" value="ECO:0000250"/>
    <property type="project" value="BHF-UCL"/>
</dbReference>
<dbReference type="GO" id="GO:0003222">
    <property type="term" value="P:ventricular trabecula myocardium morphogenesis"/>
    <property type="evidence" value="ECO:0000250"/>
    <property type="project" value="BHF-UCL"/>
</dbReference>
<dbReference type="GO" id="GO:0042060">
    <property type="term" value="P:wound healing"/>
    <property type="evidence" value="ECO:0000250"/>
    <property type="project" value="UniProtKB"/>
</dbReference>
<dbReference type="CDD" id="cd19385">
    <property type="entry name" value="TGF_beta_TGFB2"/>
    <property type="match status" value="1"/>
</dbReference>
<dbReference type="FunFam" id="2.10.90.10:FF:000004">
    <property type="entry name" value="Transforming growth factor beta"/>
    <property type="match status" value="1"/>
</dbReference>
<dbReference type="FunFam" id="2.60.120.970:FF:000002">
    <property type="entry name" value="Transforming growth factor beta"/>
    <property type="match status" value="1"/>
</dbReference>
<dbReference type="Gene3D" id="2.60.120.970">
    <property type="match status" value="1"/>
</dbReference>
<dbReference type="Gene3D" id="2.10.90.10">
    <property type="entry name" value="Cystine-knot cytokines"/>
    <property type="match status" value="1"/>
</dbReference>
<dbReference type="InterPro" id="IPR029034">
    <property type="entry name" value="Cystine-knot_cytokine"/>
</dbReference>
<dbReference type="InterPro" id="IPR001839">
    <property type="entry name" value="TGF-b_C"/>
</dbReference>
<dbReference type="InterPro" id="IPR001111">
    <property type="entry name" value="TGF-b_propeptide"/>
</dbReference>
<dbReference type="InterPro" id="IPR016319">
    <property type="entry name" value="TGF-beta"/>
</dbReference>
<dbReference type="InterPro" id="IPR015615">
    <property type="entry name" value="TGF-beta-rel"/>
</dbReference>
<dbReference type="InterPro" id="IPR003940">
    <property type="entry name" value="TGFb2"/>
</dbReference>
<dbReference type="InterPro" id="IPR017948">
    <property type="entry name" value="TGFb_CS"/>
</dbReference>
<dbReference type="PANTHER" id="PTHR11848">
    <property type="entry name" value="TGF-BETA FAMILY"/>
    <property type="match status" value="1"/>
</dbReference>
<dbReference type="PANTHER" id="PTHR11848:SF141">
    <property type="entry name" value="TRANSFORMING GROWTH FACTOR BETA-2 PROPROTEIN"/>
    <property type="match status" value="1"/>
</dbReference>
<dbReference type="Pfam" id="PF00019">
    <property type="entry name" value="TGF_beta"/>
    <property type="match status" value="1"/>
</dbReference>
<dbReference type="Pfam" id="PF00688">
    <property type="entry name" value="TGFb_propeptide"/>
    <property type="match status" value="1"/>
</dbReference>
<dbReference type="PIRSF" id="PIRSF001787">
    <property type="entry name" value="TGF-beta"/>
    <property type="match status" value="1"/>
</dbReference>
<dbReference type="PRINTS" id="PR01423">
    <property type="entry name" value="TGFBETA"/>
</dbReference>
<dbReference type="PRINTS" id="PR01425">
    <property type="entry name" value="TGFBETA2"/>
</dbReference>
<dbReference type="SMART" id="SM00204">
    <property type="entry name" value="TGFB"/>
    <property type="match status" value="1"/>
</dbReference>
<dbReference type="SUPFAM" id="SSF57501">
    <property type="entry name" value="Cystine-knot cytokines"/>
    <property type="match status" value="1"/>
</dbReference>
<dbReference type="PROSITE" id="PS00250">
    <property type="entry name" value="TGF_BETA_1"/>
    <property type="match status" value="1"/>
</dbReference>
<dbReference type="PROSITE" id="PS51362">
    <property type="entry name" value="TGF_BETA_2"/>
    <property type="match status" value="1"/>
</dbReference>
<name>TGFB2_HUMAN</name>
<feature type="signal peptide" evidence="4">
    <location>
        <begin position="1"/>
        <end position="20"/>
    </location>
</feature>
<feature type="chain" id="PRO_0000456180" description="Transforming growth factor beta-2 proprotein">
    <location>
        <begin position="21"/>
        <end position="414"/>
    </location>
</feature>
<feature type="chain" id="PRO_0000033784" description="Latency-associated peptide" evidence="20">
    <location>
        <begin position="21"/>
        <end position="302"/>
    </location>
</feature>
<feature type="chain" id="PRO_0000033785" description="Transforming growth factor beta-2" evidence="20">
    <location>
        <begin position="303"/>
        <end position="414"/>
    </location>
</feature>
<feature type="glycosylation site" description="N-linked (GlcNAc...) asparagine" evidence="4">
    <location>
        <position position="72"/>
    </location>
</feature>
<feature type="glycosylation site" description="N-linked (GlcNAc...) asparagine" evidence="4">
    <location>
        <position position="140"/>
    </location>
</feature>
<feature type="glycosylation site" description="N-linked (GlcNAc...) asparagine" evidence="4">
    <location>
        <position position="241"/>
    </location>
</feature>
<feature type="disulfide bond" evidence="7 8">
    <location>
        <begin position="309"/>
        <end position="318"/>
    </location>
</feature>
<feature type="disulfide bond" evidence="7 8">
    <location>
        <begin position="317"/>
        <end position="380"/>
    </location>
</feature>
<feature type="disulfide bond" evidence="7 8">
    <location>
        <begin position="346"/>
        <end position="411"/>
    </location>
</feature>
<feature type="disulfide bond" evidence="7 8">
    <location>
        <begin position="350"/>
        <end position="413"/>
    </location>
</feature>
<feature type="disulfide bond" description="Interchain" evidence="7 8">
    <location>
        <position position="379"/>
    </location>
</feature>
<feature type="splice variant" id="VSP_006417" description="In isoform B." evidence="15 16 17">
    <original>N</original>
    <variation>TVCPVVTTPSGSVGSLCSRQSQVLCGYLD</variation>
    <location>
        <position position="116"/>
    </location>
</feature>
<feature type="sequence variant" id="VAR_012708" description="In dbSNP:rs10482721." evidence="5 14">
    <original>R</original>
    <variation>H</variation>
    <location>
        <position position="91"/>
    </location>
</feature>
<feature type="sequence variant" id="VAR_068931" description="In LDS4." evidence="11">
    <location>
        <begin position="100"/>
        <end position="104"/>
    </location>
</feature>
<feature type="sequence variant" id="VAR_080342" description="In LDS4." evidence="12">
    <location>
        <begin position="102"/>
        <end position="414"/>
    </location>
</feature>
<feature type="sequence variant" id="VAR_018923" description="In dbSNP:rs10482810." evidence="14">
    <original>V</original>
    <variation>L</variation>
    <location>
        <position position="207"/>
    </location>
</feature>
<feature type="sequence variant" id="VAR_080343" description="In LDS4." evidence="12">
    <location>
        <begin position="229"/>
        <end position="414"/>
    </location>
</feature>
<feature type="sequence variant" id="VAR_068932" description="In LDS4; dbSNP:rs863223792." evidence="11">
    <original>R</original>
    <variation>W</variation>
    <location>
        <position position="299"/>
    </location>
</feature>
<feature type="sequence variant" id="VAR_068933" description="In LDS4; dbSNP:rs869312903." evidence="11">
    <original>R</original>
    <variation>C</variation>
    <location>
        <position position="302"/>
    </location>
</feature>
<feature type="sequence variant" id="VAR_072740" description="Found in a family with non-syndromic aortic disease; likely pathogenic; dbSNP:rs1553303352." evidence="13">
    <original>R</original>
    <variation>C</variation>
    <location>
        <position position="320"/>
    </location>
</feature>
<feature type="sequence variant" id="VAR_068934" description="In LDS4; dbSNP:rs387907278." evidence="11">
    <original>P</original>
    <variation>H</variation>
    <location>
        <position position="338"/>
    </location>
</feature>
<feature type="sequence conflict" description="In Ref. 8; AAA61162." evidence="19" ref="8">
    <original>F</original>
    <variation>L</variation>
    <location>
        <position position="32"/>
    </location>
</feature>
<feature type="sequence conflict" description="In Ref. 3; AAA50405." evidence="19" ref="3">
    <location>
        <position position="116"/>
    </location>
</feature>
<feature type="helix" evidence="23">
    <location>
        <begin position="31"/>
        <end position="47"/>
    </location>
</feature>
<feature type="helix" evidence="23">
    <location>
        <begin position="65"/>
        <end position="81"/>
    </location>
</feature>
<feature type="turn" evidence="22">
    <location>
        <begin position="96"/>
        <end position="98"/>
    </location>
</feature>
<feature type="strand" evidence="23">
    <location>
        <begin position="102"/>
        <end position="107"/>
    </location>
</feature>
<feature type="strand" evidence="23">
    <location>
        <begin position="120"/>
        <end position="124"/>
    </location>
</feature>
<feature type="strand" evidence="23">
    <location>
        <begin position="127"/>
        <end position="130"/>
    </location>
</feature>
<feature type="helix" evidence="23">
    <location>
        <begin position="135"/>
        <end position="143"/>
    </location>
</feature>
<feature type="strand" evidence="23">
    <location>
        <begin position="144"/>
        <end position="154"/>
    </location>
</feature>
<feature type="strand" evidence="23">
    <location>
        <begin position="160"/>
        <end position="171"/>
    </location>
</feature>
<feature type="strand" evidence="23">
    <location>
        <begin position="182"/>
        <end position="191"/>
    </location>
</feature>
<feature type="strand" evidence="23">
    <location>
        <begin position="197"/>
        <end position="202"/>
    </location>
</feature>
<feature type="helix" evidence="23">
    <location>
        <begin position="204"/>
        <end position="212"/>
    </location>
</feature>
<feature type="helix" evidence="23">
    <location>
        <begin position="214"/>
        <end position="216"/>
    </location>
</feature>
<feature type="strand" evidence="23">
    <location>
        <begin position="220"/>
        <end position="224"/>
    </location>
</feature>
<feature type="turn" evidence="23">
    <location>
        <begin position="251"/>
        <end position="253"/>
    </location>
</feature>
<feature type="strand" evidence="23">
    <location>
        <begin position="280"/>
        <end position="285"/>
    </location>
</feature>
<feature type="helix" evidence="23">
    <location>
        <begin position="288"/>
        <end position="291"/>
    </location>
</feature>
<feature type="helix" evidence="21">
    <location>
        <begin position="306"/>
        <end position="309"/>
    </location>
</feature>
<feature type="strand" evidence="21">
    <location>
        <begin position="315"/>
        <end position="320"/>
    </location>
</feature>
<feature type="strand" evidence="21">
    <location>
        <begin position="323"/>
        <end position="325"/>
    </location>
</feature>
<feature type="helix" evidence="21">
    <location>
        <begin position="326"/>
        <end position="330"/>
    </location>
</feature>
<feature type="strand" evidence="21">
    <location>
        <begin position="335"/>
        <end position="337"/>
    </location>
</feature>
<feature type="strand" evidence="21">
    <location>
        <begin position="339"/>
        <end position="342"/>
    </location>
</feature>
<feature type="strand" evidence="21">
    <location>
        <begin position="345"/>
        <end position="347"/>
    </location>
</feature>
<feature type="strand" evidence="21">
    <location>
        <begin position="354"/>
        <end position="356"/>
    </location>
</feature>
<feature type="helix" evidence="21">
    <location>
        <begin position="359"/>
        <end position="370"/>
    </location>
</feature>
<feature type="helix" evidence="21">
    <location>
        <begin position="372"/>
        <end position="374"/>
    </location>
</feature>
<feature type="strand" evidence="21">
    <location>
        <begin position="379"/>
        <end position="382"/>
    </location>
</feature>
<feature type="strand" evidence="21">
    <location>
        <begin position="384"/>
        <end position="394"/>
    </location>
</feature>
<feature type="strand" evidence="21">
    <location>
        <begin position="397"/>
        <end position="408"/>
    </location>
</feature>
<feature type="strand" evidence="21">
    <location>
        <begin position="411"/>
        <end position="414"/>
    </location>
</feature>
<comment type="function">
    <molecule>Transforming growth factor beta-2 proprotein</molecule>
    <text evidence="1 2">Precursor of the Latency-associated peptide (LAP) and Transforming growth factor beta-2 (TGF-beta-2) chains, which constitute the regulatory and active subunit of TGF-beta-2, respectively.</text>
</comment>
<comment type="function">
    <molecule>Latency-associated peptide</molecule>
    <text evidence="1 2">Required to maintain the Transforming growth factor beta-2 (TGF-beta-2) chain in a latent state during storage in extracellular matrix (By similarity). Associates non-covalently with TGF-beta-2 and regulates its activation via interaction with 'milieu molecules', such as LTBP1 and LRRC32/GARP, that control activation of TGF-beta-2 (By similarity).</text>
</comment>
<comment type="function">
    <molecule>Transforming growth factor beta-2</molecule>
    <text evidence="1 2 11 12">Multifunctional protein that regulates various processes such as angiogenesis and heart development (PubMed:22772368, PubMed:22772371). Activation into mature form follows different steps: following cleavage of the proprotein in the Golgi apparatus, Latency-associated peptide (LAP) and Transforming growth factor beta-2 (TGF-beta-2) chains remain non-covalently linked rendering TGF-beta-2 inactive during storage in extracellular matrix (By similarity). At the same time, LAP chain interacts with 'milieu molecules', such as LTBP1 and LRRC32/GARP, that control activation of TGF-beta-2 and maintain it in a latent state during storage in extracellular milieus (By similarity). Once activated following release of LAP, TGF-beta-2 acts by binding to TGF-beta receptors (TGFBR1 and TGFBR2), which transduce signal (By similarity).</text>
</comment>
<comment type="subunit">
    <text evidence="1 3 9">Interacts with the serine proteases, HTRA1 and HTRA3 (By similarity). Interacts with ASPN (PubMed:17827158). Interacts with MFAP5 (By similarity).</text>
</comment>
<comment type="subunit">
    <molecule>Latency-associated peptide</molecule>
    <text evidence="1 3 10">Interacts with Transforming growth factor beta-2 (TGF-beta-2) chain; interaction is non-covalent and maintains (TGF-beta-2) in a latent state (By similarity). Interacts with LRRC32/GARP; leading to regulate activation of TGF-beta-2 (PubMed:19651619). Interacts with NREP; the interaction results in a decrease in TGFB2 autoinduction (By similarity).</text>
</comment>
<comment type="subunit">
    <molecule>Transforming growth factor beta-2</molecule>
    <text evidence="1 3 7 8">Homodimer; disulfide-linked (PubMed:1631557, PubMed:1641027). Interacts with TGF-beta receptors (TGFBR1 and TGFBR2), leading to signal transduction (By similarity).</text>
</comment>
<comment type="interaction">
    <interactant intactId="EBI-779581">
        <id>P61812</id>
    </interactant>
    <interactant intactId="EBI-77613">
        <id>P05067</id>
        <label>APP</label>
    </interactant>
    <organismsDiffer>false</organismsDiffer>
    <experiments>7</experiments>
</comment>
<comment type="interaction">
    <interactant intactId="EBI-779581">
        <id>P61812</id>
    </interactant>
    <interactant intactId="EBI-25834258">
        <id>P13051-2</id>
        <label>UNG</label>
    </interactant>
    <organismsDiffer>false</organismsDiffer>
    <experiments>3</experiments>
</comment>
<comment type="subcellular location">
    <molecule>Latency-associated peptide</molecule>
    <subcellularLocation>
        <location evidence="1">Secreted</location>
        <location evidence="1">Extracellular space</location>
        <location evidence="1">Extracellular matrix</location>
    </subcellularLocation>
</comment>
<comment type="subcellular location">
    <molecule>Transforming growth factor beta-2</molecule>
    <subcellularLocation>
        <location evidence="1">Secreted</location>
    </subcellularLocation>
</comment>
<comment type="alternative products">
    <event type="alternative splicing"/>
    <isoform>
        <id>P61812-1</id>
        <id>P08112-1</id>
        <name>A</name>
        <sequence type="displayed"/>
    </isoform>
    <isoform>
        <id>P61812-2</id>
        <id>P08112-2</id>
        <name>B</name>
        <sequence type="described" ref="VSP_006417"/>
    </isoform>
</comment>
<comment type="PTM">
    <molecule>Transforming growth factor beta-2 proprotein</molecule>
    <text evidence="1">The precursor proprotein is cleaved in the Golgi apparatus to form Transforming growth factor beta-2 (TGF-beta-2) and Latency-associated peptide (LAP) chains, which remain non-covalently linked, rendering TGF-beta-2 inactive.</text>
</comment>
<comment type="disease">
    <text evidence="6">A chromosomal aberration involving TGFB2 is found in a family with Peters anomaly. Translocation t(1;7)(q41;p21) with HDAC9.</text>
</comment>
<comment type="disease" evidence="11 12">
    <disease id="DI-03523">
        <name>Loeys-Dietz syndrome 4</name>
        <acronym>LDS4</acronym>
        <description>An aortic aneurysm syndrome with widespread systemic involvement. LDS4 is characterized by arterial tortuosity, aortic dissection, intracranial aneurysm and subarachnoid hemorrhage, hypertelorism, bifid uvula, pectus deformity, bicuspid aortic valve, arachnodactyly, scoliosis, foot deformities, dural ectasia, joint hyperflexibility, and thin skin with easy bruising and striae.</description>
        <dbReference type="MIM" id="614816"/>
    </disease>
    <text>The disease is caused by variants affecting the gene represented in this entry.</text>
</comment>
<comment type="disease">
    <text evidence="13">Defects in TGFB2 may be a cause of non-syndromic aortic disease (NSAD). NSAD is a frequently asymptomatic but potentially lethal disease characterized by thoracic aortic aneurysms and dissections without additional syndromic features.</text>
</comment>
<comment type="similarity">
    <text evidence="19">Belongs to the TGF-beta family.</text>
</comment>
<comment type="caution">
    <text evidence="19">In contrast to other members of the family, does not contain a R-G-D cell attachment site motif that mediates binding to integrins and promotes release of Latency-associated peptide (LAP) chain from TGF-beta-2.</text>
</comment>
<comment type="online information" name="Wikipedia">
    <link uri="https://en.wikipedia.org/wiki/TGF_beta_2"/>
    <text>TGF beta-2 entry</text>
</comment>
<keyword id="KW-0002">3D-structure</keyword>
<keyword id="KW-0025">Alternative splicing</keyword>
<keyword id="KW-0993">Aortic aneurysm</keyword>
<keyword id="KW-0160">Chromosomal rearrangement</keyword>
<keyword id="KW-0165">Cleavage on pair of basic residues</keyword>
<keyword id="KW-0903">Direct protein sequencing</keyword>
<keyword id="KW-0225">Disease variant</keyword>
<keyword id="KW-1015">Disulfide bond</keyword>
<keyword id="KW-0272">Extracellular matrix</keyword>
<keyword id="KW-0325">Glycoprotein</keyword>
<keyword id="KW-0339">Growth factor</keyword>
<keyword id="KW-0497">Mitogen</keyword>
<keyword id="KW-1267">Proteomics identification</keyword>
<keyword id="KW-1185">Reference proteome</keyword>
<keyword id="KW-0964">Secreted</keyword>
<keyword id="KW-0732">Signal</keyword>
<protein>
    <recommendedName>
        <fullName>Transforming growth factor beta-2 proprotein</fullName>
    </recommendedName>
    <alternativeName>
        <fullName>Cetermin</fullName>
    </alternativeName>
    <alternativeName>
        <fullName evidence="18">Glioblastoma-derived T-cell suppressor factor</fullName>
        <shortName evidence="18">G-TSF</shortName>
    </alternativeName>
    <component>
        <recommendedName>
            <fullName>Latency-associated peptide</fullName>
            <shortName>LAP</shortName>
        </recommendedName>
    </component>
    <component>
        <recommendedName>
            <fullName>Transforming growth factor beta-2</fullName>
            <shortName>TGF-beta-2</shortName>
        </recommendedName>
    </component>
</protein>